<proteinExistence type="inferred from homology"/>
<protein>
    <recommendedName>
        <fullName>Cytochrome c oxidase subunit 3</fullName>
        <ecNumber>7.1.1.9</ecNumber>
    </recommendedName>
    <alternativeName>
        <fullName>Cytochrome c oxidase polypeptide III</fullName>
    </alternativeName>
</protein>
<gene>
    <name type="primary">COIII</name>
</gene>
<dbReference type="EC" id="7.1.1.9"/>
<dbReference type="EMBL" id="AY484747">
    <property type="protein sequence ID" value="AAA31906.3"/>
    <property type="molecule type" value="Genomic_DNA"/>
</dbReference>
<dbReference type="PIR" id="S66600">
    <property type="entry name" value="S66600"/>
</dbReference>
<dbReference type="RefSeq" id="YP_073340.1">
    <property type="nucleotide sequence ID" value="NC_006161.1"/>
</dbReference>
<dbReference type="SMR" id="P41775"/>
<dbReference type="GO" id="GO:0005743">
    <property type="term" value="C:mitochondrial inner membrane"/>
    <property type="evidence" value="ECO:0007669"/>
    <property type="project" value="UniProtKB-SubCell"/>
</dbReference>
<dbReference type="GO" id="GO:0004129">
    <property type="term" value="F:cytochrome-c oxidase activity"/>
    <property type="evidence" value="ECO:0007669"/>
    <property type="project" value="UniProtKB-EC"/>
</dbReference>
<dbReference type="GO" id="GO:0019646">
    <property type="term" value="P:aerobic electron transport chain"/>
    <property type="evidence" value="ECO:0007669"/>
    <property type="project" value="InterPro"/>
</dbReference>
<dbReference type="CDD" id="cd01665">
    <property type="entry name" value="Cyt_c_Oxidase_III"/>
    <property type="match status" value="1"/>
</dbReference>
<dbReference type="Gene3D" id="1.10.287.70">
    <property type="match status" value="1"/>
</dbReference>
<dbReference type="Gene3D" id="1.20.120.80">
    <property type="entry name" value="Cytochrome c oxidase, subunit III, four-helix bundle"/>
    <property type="match status" value="1"/>
</dbReference>
<dbReference type="InterPro" id="IPR024791">
    <property type="entry name" value="Cyt_c/ubiquinol_Oxase_su3"/>
</dbReference>
<dbReference type="InterPro" id="IPR033945">
    <property type="entry name" value="Cyt_c_oxase_su3_dom"/>
</dbReference>
<dbReference type="InterPro" id="IPR000298">
    <property type="entry name" value="Cyt_c_oxidase-like_su3"/>
</dbReference>
<dbReference type="InterPro" id="IPR035973">
    <property type="entry name" value="Cyt_c_oxidase_su3-like_sf"/>
</dbReference>
<dbReference type="InterPro" id="IPR013833">
    <property type="entry name" value="Cyt_c_oxidase_su3_a-hlx"/>
</dbReference>
<dbReference type="PANTHER" id="PTHR11403:SF7">
    <property type="entry name" value="CYTOCHROME C OXIDASE SUBUNIT 3"/>
    <property type="match status" value="1"/>
</dbReference>
<dbReference type="PANTHER" id="PTHR11403">
    <property type="entry name" value="CYTOCHROME C OXIDASE SUBUNIT III"/>
    <property type="match status" value="1"/>
</dbReference>
<dbReference type="Pfam" id="PF00510">
    <property type="entry name" value="COX3"/>
    <property type="match status" value="1"/>
</dbReference>
<dbReference type="SUPFAM" id="SSF81452">
    <property type="entry name" value="Cytochrome c oxidase subunit III-like"/>
    <property type="match status" value="1"/>
</dbReference>
<dbReference type="PROSITE" id="PS50253">
    <property type="entry name" value="COX3"/>
    <property type="match status" value="1"/>
</dbReference>
<organism>
    <name type="scientific">Mytilus edulis</name>
    <name type="common">Blue mussel</name>
    <dbReference type="NCBI Taxonomy" id="6550"/>
    <lineage>
        <taxon>Eukaryota</taxon>
        <taxon>Metazoa</taxon>
        <taxon>Spiralia</taxon>
        <taxon>Lophotrochozoa</taxon>
        <taxon>Mollusca</taxon>
        <taxon>Bivalvia</taxon>
        <taxon>Autobranchia</taxon>
        <taxon>Pteriomorphia</taxon>
        <taxon>Mytilida</taxon>
        <taxon>Mytiloidea</taxon>
        <taxon>Mytilidae</taxon>
        <taxon>Mytilinae</taxon>
        <taxon>Mytilus</taxon>
    </lineage>
</organism>
<accession>P41775</accession>
<name>COX3_MYTED</name>
<feature type="chain" id="PRO_0000183810" description="Cytochrome c oxidase subunit 3">
    <location>
        <begin position="1"/>
        <end position="265"/>
    </location>
</feature>
<feature type="transmembrane region" description="Helical" evidence="2">
    <location>
        <begin position="16"/>
        <end position="36"/>
    </location>
</feature>
<feature type="transmembrane region" description="Helical" evidence="2">
    <location>
        <begin position="40"/>
        <end position="60"/>
    </location>
</feature>
<feature type="transmembrane region" description="Helical" evidence="2">
    <location>
        <begin position="83"/>
        <end position="103"/>
    </location>
</feature>
<feature type="transmembrane region" description="Helical" evidence="2">
    <location>
        <begin position="159"/>
        <end position="179"/>
    </location>
</feature>
<feature type="transmembrane region" description="Helical" evidence="2">
    <location>
        <begin position="198"/>
        <end position="218"/>
    </location>
</feature>
<feature type="transmembrane region" description="Helical" evidence="2">
    <location>
        <begin position="241"/>
        <end position="261"/>
    </location>
</feature>
<evidence type="ECO:0000250" key="1">
    <source>
        <dbReference type="UniProtKB" id="P00420"/>
    </source>
</evidence>
<evidence type="ECO:0000255" key="2"/>
<evidence type="ECO:0000305" key="3"/>
<comment type="function">
    <text evidence="1">Component of the cytochrome c oxidase, the last enzyme in the mitochondrial electron transport chain which drives oxidative phosphorylation. The respiratory chain contains 3 multisubunit complexes succinate dehydrogenase (complex II, CII), ubiquinol-cytochrome c oxidoreductase (cytochrome b-c1 complex, complex III, CIII) and cytochrome c oxidase (complex IV, CIV), that cooperate to transfer electrons derived from NADH and succinate to molecular oxygen, creating an electrochemical gradient over the inner membrane that drives transmembrane transport and the ATP synthase. Cytochrome c oxidase is the component of the respiratory chain that catalyzes the reduction of oxygen to water. Electrons originating from reduced cytochrome c in the intermembrane space (IMS) are transferred via the dinuclear copper A center (CU(A)) of subunit 2 and heme A of subunit 1 to the active site in subunit 1, a binuclear center (BNC) formed by heme A3 and copper B (CU(B)). The BNC reduces molecular oxygen to 2 water molecules using 4 electrons from cytochrome c in the IMS and 4 protons from the mitochondrial matrix.</text>
</comment>
<comment type="catalytic activity">
    <reaction evidence="1">
        <text>4 Fe(II)-[cytochrome c] + O2 + 8 H(+)(in) = 4 Fe(III)-[cytochrome c] + 2 H2O + 4 H(+)(out)</text>
        <dbReference type="Rhea" id="RHEA:11436"/>
        <dbReference type="Rhea" id="RHEA-COMP:10350"/>
        <dbReference type="Rhea" id="RHEA-COMP:14399"/>
        <dbReference type="ChEBI" id="CHEBI:15377"/>
        <dbReference type="ChEBI" id="CHEBI:15378"/>
        <dbReference type="ChEBI" id="CHEBI:15379"/>
        <dbReference type="ChEBI" id="CHEBI:29033"/>
        <dbReference type="ChEBI" id="CHEBI:29034"/>
        <dbReference type="EC" id="7.1.1.9"/>
    </reaction>
    <physiologicalReaction direction="left-to-right" evidence="1">
        <dbReference type="Rhea" id="RHEA:11437"/>
    </physiologicalReaction>
</comment>
<comment type="subunit">
    <text evidence="1">Component of the cytochrome c oxidase (complex IV, CIV), a multisubunit enzyme composed of a catalytic core of 3 subunits and several supernumerary subunits. The complex exists as a monomer or a dimer and forms supercomplexes (SCs) in the inner mitochondrial membrane with ubiquinol-cytochrome c oxidoreductase (cytochrome b-c1 complex, complex III, CIII).</text>
</comment>
<comment type="subcellular location">
    <subcellularLocation>
        <location evidence="1">Mitochondrion inner membrane</location>
        <topology evidence="1">Multi-pass membrane protein</topology>
    </subcellularLocation>
</comment>
<comment type="similarity">
    <text evidence="3">Belongs to the cytochrome c oxidase subunit 3 family.</text>
</comment>
<keyword id="KW-0472">Membrane</keyword>
<keyword id="KW-0496">Mitochondrion</keyword>
<keyword id="KW-0999">Mitochondrion inner membrane</keyword>
<keyword id="KW-1278">Translocase</keyword>
<keyword id="KW-0812">Transmembrane</keyword>
<keyword id="KW-1133">Transmembrane helix</keyword>
<geneLocation type="mitochondrion"/>
<reference key="1">
    <citation type="journal article" date="1992" name="Genetics">
        <title>A novel mitochondrial genome organization for the blue mussel, Mytilus edulis.</title>
        <authorList>
            <person name="Hoffmann R.J."/>
            <person name="Boore J.L."/>
            <person name="Brown W.M."/>
        </authorList>
    </citation>
    <scope>NUCLEOTIDE SEQUENCE [GENOMIC DNA]</scope>
</reference>
<reference key="2">
    <citation type="journal article" date="2004" name="Mol. Biol. Evol.">
        <title>Complete sequences of the highly rearranged molluscan mitochondrial genomes of the scaphopod Graptacme eborea and the bivalve Mytilus edulis.</title>
        <authorList>
            <person name="Boore J.L."/>
            <person name="Medina M."/>
            <person name="Rosenberg L.A."/>
        </authorList>
    </citation>
    <scope>NUCLEOTIDE SEQUENCE [GENOMIC DNA]</scope>
</reference>
<sequence length="265" mass="30792">MNRNPYSRYYVPGPSPWPFFVAISANGMAVGLILWLHRTPSFLLMGMSLVCMLLSTFSWWRDLIREGDIGFHTRFVIKSFRDCVALFILSEVMFFFTFFWTFFHNALSPSCELGMRWPPPGIRTPNPSSTSLFETGLLISSGLFVTQAHKSMRLKDYDVGPFIGLVVTIVCGTVFFLVQLREYYWNSYTIADSVYGSVFYLLTGFHGMHVVVGTIWLMVSLVRLWRGEFSSQRHFGFEACIWYWHFVDVVWVALWCLVYVWFGGW</sequence>